<organism>
    <name type="scientific">Equus asinus</name>
    <name type="common">Donkey</name>
    <name type="synonym">Equus africanus asinus</name>
    <dbReference type="NCBI Taxonomy" id="9793"/>
    <lineage>
        <taxon>Eukaryota</taxon>
        <taxon>Metazoa</taxon>
        <taxon>Chordata</taxon>
        <taxon>Craniata</taxon>
        <taxon>Vertebrata</taxon>
        <taxon>Euteleostomi</taxon>
        <taxon>Mammalia</taxon>
        <taxon>Eutheria</taxon>
        <taxon>Laurasiatheria</taxon>
        <taxon>Perissodactyla</taxon>
        <taxon>Equidae</taxon>
        <taxon>Equus</taxon>
    </lineage>
</organism>
<dbReference type="EMBL" id="X80116">
    <property type="protein sequence ID" value="CAA56422.1"/>
    <property type="molecule type" value="mRNA"/>
</dbReference>
<dbReference type="EMBL" id="X53669">
    <property type="protein sequence ID" value="CAA37709.1"/>
    <property type="status" value="ALT_SEQ"/>
    <property type="molecule type" value="mRNA"/>
</dbReference>
<dbReference type="PIR" id="S15676">
    <property type="entry name" value="S15676"/>
</dbReference>
<dbReference type="SMR" id="P19794"/>
<dbReference type="GlyCosmos" id="P19794">
    <property type="glycosylation" value="1 site, No reported glycans"/>
</dbReference>
<dbReference type="Proteomes" id="UP000694387">
    <property type="component" value="Unplaced"/>
</dbReference>
<dbReference type="GO" id="GO:0005737">
    <property type="term" value="C:cytoplasm"/>
    <property type="evidence" value="ECO:0007669"/>
    <property type="project" value="TreeGrafter"/>
</dbReference>
<dbReference type="GO" id="GO:0005615">
    <property type="term" value="C:extracellular space"/>
    <property type="evidence" value="ECO:0007669"/>
    <property type="project" value="TreeGrafter"/>
</dbReference>
<dbReference type="GO" id="GO:0005179">
    <property type="term" value="F:hormone activity"/>
    <property type="evidence" value="ECO:0007669"/>
    <property type="project" value="UniProtKB-KW"/>
</dbReference>
<dbReference type="GO" id="GO:0007186">
    <property type="term" value="P:G protein-coupled receptor signaling pathway"/>
    <property type="evidence" value="ECO:0007669"/>
    <property type="project" value="TreeGrafter"/>
</dbReference>
<dbReference type="CDD" id="cd00069">
    <property type="entry name" value="GHB_like"/>
    <property type="match status" value="1"/>
</dbReference>
<dbReference type="FunFam" id="2.10.90.10:FF:000007">
    <property type="entry name" value="Luteinizing hormone beta subunit"/>
    <property type="match status" value="1"/>
</dbReference>
<dbReference type="Gene3D" id="2.10.90.10">
    <property type="entry name" value="Cystine-knot cytokines"/>
    <property type="match status" value="1"/>
</dbReference>
<dbReference type="InterPro" id="IPR029034">
    <property type="entry name" value="Cystine-knot_cytokine"/>
</dbReference>
<dbReference type="InterPro" id="IPR006208">
    <property type="entry name" value="Glyco_hormone_CN"/>
</dbReference>
<dbReference type="InterPro" id="IPR001545">
    <property type="entry name" value="Gonadotropin_bsu"/>
</dbReference>
<dbReference type="InterPro" id="IPR018245">
    <property type="entry name" value="Gonadotropin_bsu_CS"/>
</dbReference>
<dbReference type="PANTHER" id="PTHR11515">
    <property type="entry name" value="GLYCOPROTEIN HORMONE BETA CHAIN"/>
    <property type="match status" value="1"/>
</dbReference>
<dbReference type="PANTHER" id="PTHR11515:SF11">
    <property type="entry name" value="LUTROPIN SUBUNIT BETA"/>
    <property type="match status" value="1"/>
</dbReference>
<dbReference type="Pfam" id="PF00007">
    <property type="entry name" value="Cys_knot"/>
    <property type="match status" value="1"/>
</dbReference>
<dbReference type="SMART" id="SM00068">
    <property type="entry name" value="GHB"/>
    <property type="match status" value="1"/>
</dbReference>
<dbReference type="SUPFAM" id="SSF57501">
    <property type="entry name" value="Cystine-knot cytokines"/>
    <property type="match status" value="1"/>
</dbReference>
<dbReference type="PROSITE" id="PS00261">
    <property type="entry name" value="GLYCO_HORMONE_BETA_1"/>
    <property type="match status" value="1"/>
</dbReference>
<dbReference type="PROSITE" id="PS00689">
    <property type="entry name" value="GLYCO_HORMONE_BETA_2"/>
    <property type="match status" value="1"/>
</dbReference>
<keyword id="KW-1015">Disulfide bond</keyword>
<keyword id="KW-0325">Glycoprotein</keyword>
<keyword id="KW-0372">Hormone</keyword>
<keyword id="KW-1185">Reference proteome</keyword>
<keyword id="KW-0964">Secreted</keyword>
<keyword id="KW-0732">Signal</keyword>
<accession>P19794</accession>
<name>LSHB_EQUAS</name>
<gene>
    <name type="primary">LHB</name>
</gene>
<comment type="function">
    <text>Promotes spermatogenesis and ovulation by stimulating the testes and ovaries to synthesize steroids.</text>
</comment>
<comment type="subunit">
    <text>Heterodimer of a common alpha chain and a unique beta chain which confers biological specificity to thyrotropin, lutropin, follitropin and gonadotropin.</text>
</comment>
<comment type="subcellular location">
    <subcellularLocation>
        <location>Secreted</location>
    </subcellularLocation>
</comment>
<comment type="similarity">
    <text evidence="3">Belongs to the glycoprotein hormones subunit beta family.</text>
</comment>
<feature type="signal peptide" evidence="1">
    <location>
        <begin position="1"/>
        <end position="20"/>
    </location>
</feature>
<feature type="chain" id="PRO_0000011722" description="Lutropin/choriogonadotropin subunit beta">
    <location>
        <begin position="21"/>
        <end position="169"/>
    </location>
</feature>
<feature type="region of interest" description="Disordered" evidence="2">
    <location>
        <begin position="131"/>
        <end position="169"/>
    </location>
</feature>
<feature type="compositionally biased region" description="Low complexity" evidence="2">
    <location>
        <begin position="145"/>
        <end position="158"/>
    </location>
</feature>
<feature type="glycosylation site" description="N-linked (GlcNAc...) asparagine" evidence="3">
    <location>
        <position position="33"/>
    </location>
</feature>
<feature type="disulfide bond" evidence="1">
    <location>
        <begin position="29"/>
        <end position="77"/>
    </location>
</feature>
<feature type="disulfide bond" evidence="1">
    <location>
        <begin position="43"/>
        <end position="92"/>
    </location>
</feature>
<feature type="disulfide bond" evidence="1">
    <location>
        <begin position="46"/>
        <end position="130"/>
    </location>
</feature>
<feature type="disulfide bond" evidence="1">
    <location>
        <begin position="54"/>
        <end position="108"/>
    </location>
</feature>
<feature type="disulfide bond" evidence="1">
    <location>
        <begin position="58"/>
        <end position="110"/>
    </location>
</feature>
<feature type="disulfide bond" evidence="1">
    <location>
        <begin position="113"/>
        <end position="120"/>
    </location>
</feature>
<sequence>MEMLQGLLLWMLLSVGGVWASRGPLRPLCRPINATLAAEKEACPICITFTTSICAGYCRSMVRVMPAALPPIPQPVCTYRELRFGSIRLPGCPPGVDPMVSFPVALSCHCGPCRLKTTDCGGPRDHPLACAPQTSSSCKDPPSQPLTSTSTPTPGASRRSSHPLPINTS</sequence>
<protein>
    <recommendedName>
        <fullName>Lutropin/choriogonadotropin subunit beta</fullName>
    </recommendedName>
    <alternativeName>
        <fullName>LSH-B/CG-B</fullName>
    </alternativeName>
    <alternativeName>
        <fullName>Luteinizing hormone subunit beta</fullName>
    </alternativeName>
    <alternativeName>
        <fullName>Lutropin/choriogonadotropin beta chain</fullName>
    </alternativeName>
</protein>
<evidence type="ECO:0000250" key="1"/>
<evidence type="ECO:0000256" key="2">
    <source>
        <dbReference type="SAM" id="MobiDB-lite"/>
    </source>
</evidence>
<evidence type="ECO:0000305" key="3"/>
<proteinExistence type="evidence at transcript level"/>
<reference key="1">
    <citation type="submission" date="1994-07" db="EMBL/GenBank/DDBJ databases">
        <authorList>
            <person name="Chopineau M."/>
            <person name="Combarnous Y."/>
            <person name="Allen W.R."/>
            <person name="Stewart F."/>
        </authorList>
    </citation>
    <scope>NUCLEOTIDE SEQUENCE [MRNA]</scope>
</reference>
<reference key="2">
    <citation type="journal article" date="1990" name="J. Mol. Endocrinol.">
        <title>Partial cDNA sequence for the donkey chorionic gonadotrophin-beta subunit suggests evolution from an ancestral LH-beta gene.</title>
        <authorList>
            <person name="Leigh S.E.A."/>
            <person name="Stewart F."/>
        </authorList>
    </citation>
    <scope>PRELIMINARY NUCLEOTIDE SEQUENCE OF 105-169</scope>
    <source>
        <tissue>Placenta</tissue>
    </source>
</reference>